<reference key="1">
    <citation type="journal article" date="1996" name="DNA Res.">
        <title>Sequence analysis of the genome of the unicellular cyanobacterium Synechocystis sp. strain PCC6803. II. Sequence determination of the entire genome and assignment of potential protein-coding regions.</title>
        <authorList>
            <person name="Kaneko T."/>
            <person name="Sato S."/>
            <person name="Kotani H."/>
            <person name="Tanaka A."/>
            <person name="Asamizu E."/>
            <person name="Nakamura Y."/>
            <person name="Miyajima N."/>
            <person name="Hirosawa M."/>
            <person name="Sugiura M."/>
            <person name="Sasamoto S."/>
            <person name="Kimura T."/>
            <person name="Hosouchi T."/>
            <person name="Matsuno A."/>
            <person name="Muraki A."/>
            <person name="Nakazaki N."/>
            <person name="Naruo K."/>
            <person name="Okumura S."/>
            <person name="Shimpo S."/>
            <person name="Takeuchi C."/>
            <person name="Wada T."/>
            <person name="Watanabe A."/>
            <person name="Yamada M."/>
            <person name="Yasuda M."/>
            <person name="Tabata S."/>
        </authorList>
    </citation>
    <scope>NUCLEOTIDE SEQUENCE [LARGE SCALE GENOMIC DNA]</scope>
    <source>
        <strain>ATCC 27184 / PCC 6803 / Kazusa</strain>
    </source>
</reference>
<feature type="chain" id="PRO_0000178101" description="Apolipoprotein N-acyltransferase">
    <location>
        <begin position="1"/>
        <end position="519"/>
    </location>
</feature>
<feature type="transmembrane region" description="Helical" evidence="1">
    <location>
        <begin position="6"/>
        <end position="26"/>
    </location>
</feature>
<feature type="transmembrane region" description="Helical" evidence="1">
    <location>
        <begin position="47"/>
        <end position="67"/>
    </location>
</feature>
<feature type="transmembrane region" description="Helical" evidence="1">
    <location>
        <begin position="83"/>
        <end position="103"/>
    </location>
</feature>
<feature type="transmembrane region" description="Helical" evidence="1">
    <location>
        <begin position="126"/>
        <end position="146"/>
    </location>
</feature>
<feature type="transmembrane region" description="Helical" evidence="1">
    <location>
        <begin position="174"/>
        <end position="194"/>
    </location>
</feature>
<feature type="transmembrane region" description="Helical" evidence="1">
    <location>
        <begin position="206"/>
        <end position="226"/>
    </location>
</feature>
<feature type="transmembrane region" description="Helical" evidence="1">
    <location>
        <begin position="496"/>
        <end position="516"/>
    </location>
</feature>
<feature type="domain" description="CN hydrolase" evidence="1">
    <location>
        <begin position="244"/>
        <end position="482"/>
    </location>
</feature>
<feature type="active site" description="Proton acceptor" evidence="1">
    <location>
        <position position="285"/>
    </location>
</feature>
<feature type="active site" evidence="1">
    <location>
        <position position="343"/>
    </location>
</feature>
<feature type="active site" description="Nucleophile" evidence="1">
    <location>
        <position position="394"/>
    </location>
</feature>
<gene>
    <name evidence="1" type="primary">lnt</name>
    <name type="ordered locus">slr0819</name>
</gene>
<comment type="function">
    <text evidence="1">Catalyzes the phospholipid dependent N-acylation of the N-terminal cysteine of apolipoprotein, the last step in lipoprotein maturation.</text>
</comment>
<comment type="catalytic activity">
    <reaction evidence="1">
        <text>N-terminal S-1,2-diacyl-sn-glyceryl-L-cysteinyl-[lipoprotein] + a glycerophospholipid = N-acyl-S-1,2-diacyl-sn-glyceryl-L-cysteinyl-[lipoprotein] + a 2-acyl-sn-glycero-3-phospholipid + H(+)</text>
        <dbReference type="Rhea" id="RHEA:48228"/>
        <dbReference type="Rhea" id="RHEA-COMP:14681"/>
        <dbReference type="Rhea" id="RHEA-COMP:14684"/>
        <dbReference type="ChEBI" id="CHEBI:15378"/>
        <dbReference type="ChEBI" id="CHEBI:136912"/>
        <dbReference type="ChEBI" id="CHEBI:140656"/>
        <dbReference type="ChEBI" id="CHEBI:140657"/>
        <dbReference type="ChEBI" id="CHEBI:140660"/>
        <dbReference type="EC" id="2.3.1.269"/>
    </reaction>
</comment>
<comment type="pathway">
    <text evidence="1">Protein modification; lipoprotein biosynthesis (N-acyl transfer).</text>
</comment>
<comment type="subcellular location">
    <subcellularLocation>
        <location evidence="1">Cell inner membrane</location>
        <topology evidence="1">Multi-pass membrane protein</topology>
    </subcellularLocation>
</comment>
<comment type="similarity">
    <text evidence="1 2">Belongs to the CN hydrolase family. Apolipoprotein N-acyltransferase subfamily.</text>
</comment>
<evidence type="ECO:0000255" key="1">
    <source>
        <dbReference type="HAMAP-Rule" id="MF_01148"/>
    </source>
</evidence>
<evidence type="ECO:0000305" key="2"/>
<protein>
    <recommendedName>
        <fullName evidence="1">Apolipoprotein N-acyltransferase</fullName>
        <shortName evidence="1">ALP N-acyltransferase</shortName>
        <ecNumber evidence="1">2.3.1.269</ecNumber>
    </recommendedName>
</protein>
<accession>P74055</accession>
<dbReference type="EC" id="2.3.1.269" evidence="1"/>
<dbReference type="EMBL" id="BA000022">
    <property type="protein sequence ID" value="BAA18131.1"/>
    <property type="molecule type" value="Genomic_DNA"/>
</dbReference>
<dbReference type="PIR" id="S75570">
    <property type="entry name" value="S75570"/>
</dbReference>
<dbReference type="SMR" id="P74055"/>
<dbReference type="STRING" id="1148.gene:10499003"/>
<dbReference type="PaxDb" id="1148-1653215"/>
<dbReference type="EnsemblBacteria" id="BAA18131">
    <property type="protein sequence ID" value="BAA18131"/>
    <property type="gene ID" value="BAA18131"/>
</dbReference>
<dbReference type="KEGG" id="syn:slr0819"/>
<dbReference type="eggNOG" id="COG0815">
    <property type="taxonomic scope" value="Bacteria"/>
</dbReference>
<dbReference type="InParanoid" id="P74055"/>
<dbReference type="PhylomeDB" id="P74055"/>
<dbReference type="UniPathway" id="UPA00666"/>
<dbReference type="Proteomes" id="UP000001425">
    <property type="component" value="Chromosome"/>
</dbReference>
<dbReference type="GO" id="GO:0005886">
    <property type="term" value="C:plasma membrane"/>
    <property type="evidence" value="ECO:0007669"/>
    <property type="project" value="UniProtKB-SubCell"/>
</dbReference>
<dbReference type="GO" id="GO:0016410">
    <property type="term" value="F:N-acyltransferase activity"/>
    <property type="evidence" value="ECO:0007669"/>
    <property type="project" value="UniProtKB-UniRule"/>
</dbReference>
<dbReference type="GO" id="GO:0042158">
    <property type="term" value="P:lipoprotein biosynthetic process"/>
    <property type="evidence" value="ECO:0007669"/>
    <property type="project" value="UniProtKB-UniRule"/>
</dbReference>
<dbReference type="CDD" id="cd07571">
    <property type="entry name" value="ALP_N-acyl_transferase"/>
    <property type="match status" value="1"/>
</dbReference>
<dbReference type="Gene3D" id="3.60.110.10">
    <property type="entry name" value="Carbon-nitrogen hydrolase"/>
    <property type="match status" value="1"/>
</dbReference>
<dbReference type="HAMAP" id="MF_01148">
    <property type="entry name" value="Lnt"/>
    <property type="match status" value="1"/>
</dbReference>
<dbReference type="InterPro" id="IPR004563">
    <property type="entry name" value="Apolipo_AcylTrfase"/>
</dbReference>
<dbReference type="InterPro" id="IPR003010">
    <property type="entry name" value="C-N_Hydrolase"/>
</dbReference>
<dbReference type="InterPro" id="IPR036526">
    <property type="entry name" value="C-N_Hydrolase_sf"/>
</dbReference>
<dbReference type="InterPro" id="IPR045378">
    <property type="entry name" value="LNT_N"/>
</dbReference>
<dbReference type="NCBIfam" id="TIGR00546">
    <property type="entry name" value="lnt"/>
    <property type="match status" value="1"/>
</dbReference>
<dbReference type="PANTHER" id="PTHR38686">
    <property type="entry name" value="APOLIPOPROTEIN N-ACYLTRANSFERASE"/>
    <property type="match status" value="1"/>
</dbReference>
<dbReference type="PANTHER" id="PTHR38686:SF1">
    <property type="entry name" value="APOLIPOPROTEIN N-ACYLTRANSFERASE"/>
    <property type="match status" value="1"/>
</dbReference>
<dbReference type="Pfam" id="PF00795">
    <property type="entry name" value="CN_hydrolase"/>
    <property type="match status" value="1"/>
</dbReference>
<dbReference type="Pfam" id="PF20154">
    <property type="entry name" value="LNT_N"/>
    <property type="match status" value="1"/>
</dbReference>
<dbReference type="SUPFAM" id="SSF56317">
    <property type="entry name" value="Carbon-nitrogen hydrolase"/>
    <property type="match status" value="1"/>
</dbReference>
<dbReference type="PROSITE" id="PS50263">
    <property type="entry name" value="CN_HYDROLASE"/>
    <property type="match status" value="1"/>
</dbReference>
<organism>
    <name type="scientific">Synechocystis sp. (strain ATCC 27184 / PCC 6803 / Kazusa)</name>
    <dbReference type="NCBI Taxonomy" id="1111708"/>
    <lineage>
        <taxon>Bacteria</taxon>
        <taxon>Bacillati</taxon>
        <taxon>Cyanobacteriota</taxon>
        <taxon>Cyanophyceae</taxon>
        <taxon>Synechococcales</taxon>
        <taxon>Merismopediaceae</taxon>
        <taxon>Synechocystis</taxon>
    </lineage>
</organism>
<keyword id="KW-0012">Acyltransferase</keyword>
<keyword id="KW-0997">Cell inner membrane</keyword>
<keyword id="KW-1003">Cell membrane</keyword>
<keyword id="KW-0472">Membrane</keyword>
<keyword id="KW-1185">Reference proteome</keyword>
<keyword id="KW-0808">Transferase</keyword>
<keyword id="KW-0812">Transmembrane</keyword>
<keyword id="KW-1133">Transmembrane helix</keyword>
<proteinExistence type="inferred from homology"/>
<sequence length="519" mass="58131">MGLATAPLGWTYVAWFGQIPLWIWIFRANTTRLNFTQLKQFLISRSLTAIAWGGGFYGVALFWITGVHPLTWLGVPWLASLAIAAFCWLAITAWGVVLVFVWLLAMAVWEVTTARTKVNSTFKKYLFILWGTASWCGLETLWSHSILWWSPVAYTQSPSQLHFLQWGAIGGPALLSAFIVAVNGFLALGLIDFLDGKTVNKNKQNWHYFLIAILIWLFCQGGGWLLYQKPLADTPEEKINVGIIQGNIPNQIKFNSEGWQRAIAGYTEGYKKLTEQGAEIVLTPEGALPYLWETVVAKSGFYQAILQTQVPVWLGAYGTKGDGYTNSLLTVDGQGKLLGRYDKFKLVPLGEYIPLSNVFGQLIQRLSPLKEQLLPGDRPQVLPTPFGPAAVVICYESAFPDLLRSQLLQGGEFILSSANNAHYSDTMAAQHHALDVMRAIEGDRWLARATNTGLSAIINPRGKTLWLSAMNQYEIHAAPIYRRRGLILYSRWGDWVVFLLLVVSAIAWLYQIVFPLNQR</sequence>
<name>LNT_SYNY3</name>